<gene>
    <name evidence="1" type="primary">asnS</name>
    <name type="ordered locus">ABC2059</name>
</gene>
<protein>
    <recommendedName>
        <fullName evidence="1">Asparagine--tRNA ligase</fullName>
        <ecNumber evidence="1">6.1.1.22</ecNumber>
    </recommendedName>
    <alternativeName>
        <fullName evidence="1">Asparaginyl-tRNA synthetase</fullName>
        <shortName evidence="1">AsnRS</shortName>
    </alternativeName>
</protein>
<reference key="1">
    <citation type="submission" date="2003-10" db="EMBL/GenBank/DDBJ databases">
        <title>The complete genome sequence of the alkaliphilic Bacillus clausii KSM-K16.</title>
        <authorList>
            <person name="Takaki Y."/>
            <person name="Kageyama Y."/>
            <person name="Shimamura S."/>
            <person name="Suzuki H."/>
            <person name="Nishi S."/>
            <person name="Hatada Y."/>
            <person name="Kawai S."/>
            <person name="Ito S."/>
            <person name="Horikoshi K."/>
        </authorList>
    </citation>
    <scope>NUCLEOTIDE SEQUENCE [LARGE SCALE GENOMIC DNA]</scope>
    <source>
        <strain>KSM-K16</strain>
    </source>
</reference>
<organism>
    <name type="scientific">Shouchella clausii (strain KSM-K16)</name>
    <name type="common">Alkalihalobacillus clausii</name>
    <dbReference type="NCBI Taxonomy" id="66692"/>
    <lineage>
        <taxon>Bacteria</taxon>
        <taxon>Bacillati</taxon>
        <taxon>Bacillota</taxon>
        <taxon>Bacilli</taxon>
        <taxon>Bacillales</taxon>
        <taxon>Bacillaceae</taxon>
        <taxon>Shouchella</taxon>
    </lineage>
</organism>
<dbReference type="EC" id="6.1.1.22" evidence="1"/>
<dbReference type="EMBL" id="AP006627">
    <property type="protein sequence ID" value="BAD64594.1"/>
    <property type="molecule type" value="Genomic_DNA"/>
</dbReference>
<dbReference type="RefSeq" id="WP_011246902.1">
    <property type="nucleotide sequence ID" value="NC_006582.1"/>
</dbReference>
<dbReference type="SMR" id="Q5WGB1"/>
<dbReference type="STRING" id="66692.ABC2059"/>
<dbReference type="KEGG" id="bcl:ABC2059"/>
<dbReference type="eggNOG" id="COG0017">
    <property type="taxonomic scope" value="Bacteria"/>
</dbReference>
<dbReference type="HOGENOM" id="CLU_004553_2_0_9"/>
<dbReference type="OrthoDB" id="9762036at2"/>
<dbReference type="Proteomes" id="UP000001168">
    <property type="component" value="Chromosome"/>
</dbReference>
<dbReference type="GO" id="GO:0005737">
    <property type="term" value="C:cytoplasm"/>
    <property type="evidence" value="ECO:0007669"/>
    <property type="project" value="UniProtKB-SubCell"/>
</dbReference>
<dbReference type="GO" id="GO:0004816">
    <property type="term" value="F:asparagine-tRNA ligase activity"/>
    <property type="evidence" value="ECO:0007669"/>
    <property type="project" value="UniProtKB-UniRule"/>
</dbReference>
<dbReference type="GO" id="GO:0005524">
    <property type="term" value="F:ATP binding"/>
    <property type="evidence" value="ECO:0007669"/>
    <property type="project" value="UniProtKB-UniRule"/>
</dbReference>
<dbReference type="GO" id="GO:0140096">
    <property type="term" value="F:catalytic activity, acting on a protein"/>
    <property type="evidence" value="ECO:0007669"/>
    <property type="project" value="UniProtKB-ARBA"/>
</dbReference>
<dbReference type="GO" id="GO:0003676">
    <property type="term" value="F:nucleic acid binding"/>
    <property type="evidence" value="ECO:0007669"/>
    <property type="project" value="InterPro"/>
</dbReference>
<dbReference type="GO" id="GO:0016740">
    <property type="term" value="F:transferase activity"/>
    <property type="evidence" value="ECO:0007669"/>
    <property type="project" value="UniProtKB-ARBA"/>
</dbReference>
<dbReference type="GO" id="GO:0006421">
    <property type="term" value="P:asparaginyl-tRNA aminoacylation"/>
    <property type="evidence" value="ECO:0007669"/>
    <property type="project" value="UniProtKB-UniRule"/>
</dbReference>
<dbReference type="CDD" id="cd04323">
    <property type="entry name" value="AsnRS_cyto_like_N"/>
    <property type="match status" value="1"/>
</dbReference>
<dbReference type="CDD" id="cd00776">
    <property type="entry name" value="AsxRS_core"/>
    <property type="match status" value="1"/>
</dbReference>
<dbReference type="Gene3D" id="3.30.930.10">
    <property type="entry name" value="Bira Bifunctional Protein, Domain 2"/>
    <property type="match status" value="1"/>
</dbReference>
<dbReference type="Gene3D" id="2.40.50.140">
    <property type="entry name" value="Nucleic acid-binding proteins"/>
    <property type="match status" value="1"/>
</dbReference>
<dbReference type="HAMAP" id="MF_00534">
    <property type="entry name" value="Asn_tRNA_synth"/>
    <property type="match status" value="1"/>
</dbReference>
<dbReference type="InterPro" id="IPR004364">
    <property type="entry name" value="Aa-tRNA-synt_II"/>
</dbReference>
<dbReference type="InterPro" id="IPR006195">
    <property type="entry name" value="aa-tRNA-synth_II"/>
</dbReference>
<dbReference type="InterPro" id="IPR045864">
    <property type="entry name" value="aa-tRNA-synth_II/BPL/LPL"/>
</dbReference>
<dbReference type="InterPro" id="IPR004522">
    <property type="entry name" value="Asn-tRNA-ligase"/>
</dbReference>
<dbReference type="InterPro" id="IPR002312">
    <property type="entry name" value="Asp/Asn-tRNA-synth_IIb"/>
</dbReference>
<dbReference type="InterPro" id="IPR012340">
    <property type="entry name" value="NA-bd_OB-fold"/>
</dbReference>
<dbReference type="InterPro" id="IPR004365">
    <property type="entry name" value="NA-bd_OB_tRNA"/>
</dbReference>
<dbReference type="NCBIfam" id="TIGR00457">
    <property type="entry name" value="asnS"/>
    <property type="match status" value="1"/>
</dbReference>
<dbReference type="NCBIfam" id="NF003037">
    <property type="entry name" value="PRK03932.1"/>
    <property type="match status" value="1"/>
</dbReference>
<dbReference type="NCBIfam" id="NF003483">
    <property type="entry name" value="PRK05159.1"/>
    <property type="match status" value="1"/>
</dbReference>
<dbReference type="PANTHER" id="PTHR22594:SF34">
    <property type="entry name" value="ASPARAGINE--TRNA LIGASE, MITOCHONDRIAL-RELATED"/>
    <property type="match status" value="1"/>
</dbReference>
<dbReference type="PANTHER" id="PTHR22594">
    <property type="entry name" value="ASPARTYL/LYSYL-TRNA SYNTHETASE"/>
    <property type="match status" value="1"/>
</dbReference>
<dbReference type="Pfam" id="PF00152">
    <property type="entry name" value="tRNA-synt_2"/>
    <property type="match status" value="1"/>
</dbReference>
<dbReference type="Pfam" id="PF01336">
    <property type="entry name" value="tRNA_anti-codon"/>
    <property type="match status" value="1"/>
</dbReference>
<dbReference type="PRINTS" id="PR01042">
    <property type="entry name" value="TRNASYNTHASP"/>
</dbReference>
<dbReference type="SUPFAM" id="SSF55681">
    <property type="entry name" value="Class II aaRS and biotin synthetases"/>
    <property type="match status" value="1"/>
</dbReference>
<dbReference type="SUPFAM" id="SSF50249">
    <property type="entry name" value="Nucleic acid-binding proteins"/>
    <property type="match status" value="1"/>
</dbReference>
<dbReference type="PROSITE" id="PS50862">
    <property type="entry name" value="AA_TRNA_LIGASE_II"/>
    <property type="match status" value="1"/>
</dbReference>
<accession>Q5WGB1</accession>
<evidence type="ECO:0000255" key="1">
    <source>
        <dbReference type="HAMAP-Rule" id="MF_00534"/>
    </source>
</evidence>
<feature type="chain" id="PRO_0000176392" description="Asparagine--tRNA ligase">
    <location>
        <begin position="1"/>
        <end position="430"/>
    </location>
</feature>
<proteinExistence type="inferred from homology"/>
<sequence length="430" mass="49077">MKTTIAQVGRYVNEQVTIGAWIANKRSSGKIAFLQLRDGTGFIQGVVVKAEVPEDVFALAKSITQESSLYVTGTVREDERSPSGYELSVEQIELIHQATDYPITPKQHGTEFLMDHRHLWLRSKRQHAIMKIRSQIIRSTYDFFSERGFTKLDSPILTGSSPEGTSELFHTKYFDEDAYLSQSGQLYAEAGAMALGRVFTFGPTFRAEKSKTRRHLIEFWMIEPEMAFVEHEESLEIQEQYVAHLAKAVLDHCQLELKQLGRDVTKLEAIKAPFPRITYDEALDLLKEKGFDDISWGDDFGSPHETAIAEHFDKPVFITRYPRSLKPFYMQPAPDRDDVVLCADLIAPEGYGEIIGGSERIHDYDLLKQELEKHNLPLDAYGWYLDLRKYGSVPHSGFGLGLERTVAWLSGTEHVRETIPFPRLLNRLYP</sequence>
<keyword id="KW-0030">Aminoacyl-tRNA synthetase</keyword>
<keyword id="KW-0067">ATP-binding</keyword>
<keyword id="KW-0963">Cytoplasm</keyword>
<keyword id="KW-0436">Ligase</keyword>
<keyword id="KW-0547">Nucleotide-binding</keyword>
<keyword id="KW-0648">Protein biosynthesis</keyword>
<keyword id="KW-1185">Reference proteome</keyword>
<comment type="catalytic activity">
    <reaction evidence="1">
        <text>tRNA(Asn) + L-asparagine + ATP = L-asparaginyl-tRNA(Asn) + AMP + diphosphate + H(+)</text>
        <dbReference type="Rhea" id="RHEA:11180"/>
        <dbReference type="Rhea" id="RHEA-COMP:9659"/>
        <dbReference type="Rhea" id="RHEA-COMP:9674"/>
        <dbReference type="ChEBI" id="CHEBI:15378"/>
        <dbReference type="ChEBI" id="CHEBI:30616"/>
        <dbReference type="ChEBI" id="CHEBI:33019"/>
        <dbReference type="ChEBI" id="CHEBI:58048"/>
        <dbReference type="ChEBI" id="CHEBI:78442"/>
        <dbReference type="ChEBI" id="CHEBI:78515"/>
        <dbReference type="ChEBI" id="CHEBI:456215"/>
        <dbReference type="EC" id="6.1.1.22"/>
    </reaction>
</comment>
<comment type="subunit">
    <text evidence="1">Homodimer.</text>
</comment>
<comment type="subcellular location">
    <subcellularLocation>
        <location evidence="1">Cytoplasm</location>
    </subcellularLocation>
</comment>
<comment type="similarity">
    <text evidence="1">Belongs to the class-II aminoacyl-tRNA synthetase family.</text>
</comment>
<name>SYN_SHOC1</name>